<accession>P0A8X5</accession>
<accession>P75873</accession>
<sequence>MKTGIVTTLIALCLPVSVFATTLRLSTDVDLLVLDGKKVSSSLLRGADSIELDNGPHQLVFRVEKTIHLSNSEERLYISPPLVVSFNTQLINQVNFRLPRLENEREANHFDAAPRLELLDGDATPIPVKLDILAITSTAKTIDYEVEVERYNKSAKRASLPQFATMMADDSTLLSGVSELDAIPPQSQVLTEQRLKYWFKLADPQTRNTFLQWAEKQPSS</sequence>
<organism>
    <name type="scientific">Escherichia coli O6:H1 (strain CFT073 / ATCC 700928 / UPEC)</name>
    <dbReference type="NCBI Taxonomy" id="199310"/>
    <lineage>
        <taxon>Bacteria</taxon>
        <taxon>Pseudomonadati</taxon>
        <taxon>Pseudomonadota</taxon>
        <taxon>Gammaproteobacteria</taxon>
        <taxon>Enterobacterales</taxon>
        <taxon>Enterobacteriaceae</taxon>
        <taxon>Escherichia</taxon>
    </lineage>
</organism>
<proteinExistence type="inferred from homology"/>
<gene>
    <name type="primary">yccT</name>
    <name type="ordered locus">c1101</name>
</gene>
<protein>
    <recommendedName>
        <fullName>UPF0319 protein YccT</fullName>
    </recommendedName>
</protein>
<dbReference type="EMBL" id="AE014075">
    <property type="protein sequence ID" value="AAN79569.1"/>
    <property type="molecule type" value="Genomic_DNA"/>
</dbReference>
<dbReference type="RefSeq" id="WP_000847791.1">
    <property type="nucleotide sequence ID" value="NZ_CP051263.1"/>
</dbReference>
<dbReference type="STRING" id="199310.c1101"/>
<dbReference type="KEGG" id="ecc:c1101"/>
<dbReference type="eggNOG" id="COG3110">
    <property type="taxonomic scope" value="Bacteria"/>
</dbReference>
<dbReference type="HOGENOM" id="CLU_073782_2_0_6"/>
<dbReference type="BioCyc" id="ECOL199310:C1101-MONOMER"/>
<dbReference type="Proteomes" id="UP000001410">
    <property type="component" value="Chromosome"/>
</dbReference>
<dbReference type="HAMAP" id="MF_00789">
    <property type="entry name" value="UPF0319"/>
    <property type="match status" value="1"/>
</dbReference>
<dbReference type="InterPro" id="IPR018635">
    <property type="entry name" value="UPF0319"/>
</dbReference>
<dbReference type="NCBIfam" id="NF047712">
    <property type="entry name" value="CrliSynInhib"/>
    <property type="match status" value="1"/>
</dbReference>
<dbReference type="NCBIfam" id="NF002967">
    <property type="entry name" value="PRK03641.1"/>
    <property type="match status" value="1"/>
</dbReference>
<dbReference type="PANTHER" id="PTHR38108">
    <property type="entry name" value="UPF0319 PROTEIN YCCT"/>
    <property type="match status" value="1"/>
</dbReference>
<dbReference type="PANTHER" id="PTHR38108:SF1">
    <property type="entry name" value="UPF0319 PROTEIN YCCT"/>
    <property type="match status" value="1"/>
</dbReference>
<dbReference type="Pfam" id="PF09829">
    <property type="entry name" value="DUF2057"/>
    <property type="match status" value="1"/>
</dbReference>
<evidence type="ECO:0000255" key="1"/>
<evidence type="ECO:0000305" key="2"/>
<comment type="similarity">
    <text evidence="2">Belongs to the UPF0319 family.</text>
</comment>
<reference key="1">
    <citation type="journal article" date="2002" name="Proc. Natl. Acad. Sci. U.S.A.">
        <title>Extensive mosaic structure revealed by the complete genome sequence of uropathogenic Escherichia coli.</title>
        <authorList>
            <person name="Welch R.A."/>
            <person name="Burland V."/>
            <person name="Plunkett G. III"/>
            <person name="Redford P."/>
            <person name="Roesch P."/>
            <person name="Rasko D."/>
            <person name="Buckles E.L."/>
            <person name="Liou S.-R."/>
            <person name="Boutin A."/>
            <person name="Hackett J."/>
            <person name="Stroud D."/>
            <person name="Mayhew G.F."/>
            <person name="Rose D.J."/>
            <person name="Zhou S."/>
            <person name="Schwartz D.C."/>
            <person name="Perna N.T."/>
            <person name="Mobley H.L.T."/>
            <person name="Donnenberg M.S."/>
            <person name="Blattner F.R."/>
        </authorList>
    </citation>
    <scope>NUCLEOTIDE SEQUENCE [LARGE SCALE GENOMIC DNA]</scope>
    <source>
        <strain>CFT073 / ATCC 700928 / UPEC</strain>
    </source>
</reference>
<feature type="signal peptide" evidence="1">
    <location>
        <begin position="1"/>
        <end position="20"/>
    </location>
</feature>
<feature type="chain" id="PRO_0000036295" description="UPF0319 protein YccT">
    <location>
        <begin position="21"/>
        <end position="220"/>
    </location>
</feature>
<keyword id="KW-1185">Reference proteome</keyword>
<keyword id="KW-0732">Signal</keyword>
<name>YCCT_ECOL6</name>